<comment type="function">
    <text evidence="3">Implicated in endocytosis. May recruit other proteins to membranes with high curvature (By similarity).</text>
</comment>
<comment type="subunit">
    <text evidence="1">Interacts with ARC, SYNJ1 and DNM1. Interacts with PDCD6IP. Interacts with BIN2 (By similarity).</text>
</comment>
<comment type="subcellular location">
    <subcellularLocation>
        <location evidence="3">Cytoplasm</location>
    </subcellularLocation>
    <subcellularLocation>
        <location evidence="3">Early endosome membrane</location>
        <topology evidence="3">Peripheral membrane protein</topology>
    </subcellularLocation>
    <subcellularLocation>
        <location evidence="1">Cell projection</location>
        <location evidence="1">Podosome</location>
    </subcellularLocation>
    <text evidence="3">Associated with postsynaptic endosomes in hippocampal neurons.</text>
</comment>
<comment type="domain">
    <text evidence="2">An N-terminal amphipathic helix, the BAR domain and a second amphipathic helix inserted into helix 1 of the BAR domain (N-BAR domain) induce membrane curvature and bind curved membranes.</text>
</comment>
<comment type="similarity">
    <text evidence="6">Belongs to the endophilin family.</text>
</comment>
<evidence type="ECO:0000250" key="1"/>
<evidence type="ECO:0000250" key="2">
    <source>
        <dbReference type="UniProtKB" id="O35179"/>
    </source>
</evidence>
<evidence type="ECO:0000250" key="3">
    <source>
        <dbReference type="UniProtKB" id="O35964"/>
    </source>
</evidence>
<evidence type="ECO:0000250" key="4">
    <source>
        <dbReference type="UniProtKB" id="Q62419"/>
    </source>
</evidence>
<evidence type="ECO:0000250" key="5">
    <source>
        <dbReference type="UniProtKB" id="Q99961"/>
    </source>
</evidence>
<evidence type="ECO:0000255" key="6"/>
<evidence type="ECO:0000255" key="7">
    <source>
        <dbReference type="PROSITE-ProRule" id="PRU00192"/>
    </source>
</evidence>
<evidence type="ECO:0000255" key="8">
    <source>
        <dbReference type="PROSITE-ProRule" id="PRU00361"/>
    </source>
</evidence>
<evidence type="ECO:0000256" key="9">
    <source>
        <dbReference type="SAM" id="MobiDB-lite"/>
    </source>
</evidence>
<evidence type="ECO:0000305" key="10"/>
<evidence type="ECO:0000312" key="11">
    <source>
        <dbReference type="EMBL" id="AAI05445.1"/>
    </source>
</evidence>
<evidence type="ECO:0000312" key="12">
    <source>
        <dbReference type="EMBL" id="ABF57308.1"/>
    </source>
</evidence>
<protein>
    <recommendedName>
        <fullName>Endophilin-A2</fullName>
    </recommendedName>
    <alternativeName>
        <fullName>Endophilin-2</fullName>
    </alternativeName>
    <alternativeName>
        <fullName>SH3 domain protein 2B</fullName>
    </alternativeName>
    <alternativeName>
        <fullName>SH3 domain-containing GRB2-like protein 1</fullName>
    </alternativeName>
</protein>
<sequence length="368" mass="41455">MSVAGLKKQFYKASQLVSEKVGGAEGTKLDDDFKEMEKKVDVTSKAVTEVLARTIEYLQPNPASRAKLTMLNTVSKIRGQVKNPGYPQSEGLLGECMIRHGKELGGESNFGDALLDAGESMKRLAEVKDSLDIEVKQNFIDPLQNLCDKDLKEIQHHLKKLEGRRLDFDYKKKRQGKIPDEELRQAMEKFEESKEVAETSMHHLLETDIEQVSQLSALVDAQLDYHRQAVQILDELADKLKRRMREASSRPKREYKPKPRELLDLGEPEQSNGGFPCAAAPKITASSSFRSSDKPVRTPSRSMPPLDQPSCKALYDFEPENDGELGFHEGDIITLTNQIDENWYEGMLDGQSGFFPLSYVEVLVPLPQ</sequence>
<reference evidence="12" key="1">
    <citation type="journal article" date="2005" name="BMC Genomics">
        <title>Characterization of 954 bovine full-CDS cDNA sequences.</title>
        <authorList>
            <person name="Harhay G.P."/>
            <person name="Sonstegard T.S."/>
            <person name="Keele J.W."/>
            <person name="Heaton M.P."/>
            <person name="Clawson M.L."/>
            <person name="Snelling W.M."/>
            <person name="Wiedmann R.T."/>
            <person name="Van Tassell C.P."/>
            <person name="Smith T.P.L."/>
        </authorList>
    </citation>
    <scope>NUCLEOTIDE SEQUENCE [LARGE SCALE MRNA]</scope>
</reference>
<reference evidence="11" key="2">
    <citation type="submission" date="2005-09" db="EMBL/GenBank/DDBJ databases">
        <authorList>
            <consortium name="NIH - Mammalian Gene Collection (MGC) project"/>
        </authorList>
    </citation>
    <scope>NUCLEOTIDE SEQUENCE [LARGE SCALE MRNA]</scope>
    <source>
        <strain evidence="11">Hereford</strain>
        <tissue evidence="11">Fetal liver</tissue>
    </source>
</reference>
<proteinExistence type="evidence at transcript level"/>
<feature type="chain" id="PRO_0000309485" description="Endophilin-A2">
    <location>
        <begin position="1"/>
        <end position="368"/>
    </location>
</feature>
<feature type="domain" description="BAR" evidence="8">
    <location>
        <begin position="18"/>
        <end position="249"/>
    </location>
</feature>
<feature type="domain" description="SH3" evidence="7">
    <location>
        <begin position="306"/>
        <end position="365"/>
    </location>
</feature>
<feature type="region of interest" description="Membrane-binding amphipathic helix" evidence="2">
    <location>
        <begin position="1"/>
        <end position="21"/>
    </location>
</feature>
<feature type="region of interest" description="Required for dimerization upon membrane association" evidence="2">
    <location>
        <begin position="60"/>
        <end position="87"/>
    </location>
</feature>
<feature type="region of interest" description="Interaction with ARC" evidence="3">
    <location>
        <begin position="218"/>
        <end position="254"/>
    </location>
</feature>
<feature type="region of interest" description="Disordered" evidence="9">
    <location>
        <begin position="243"/>
        <end position="308"/>
    </location>
</feature>
<feature type="coiled-coil region" evidence="6">
    <location>
        <begin position="181"/>
        <end position="250"/>
    </location>
</feature>
<feature type="compositionally biased region" description="Basic and acidic residues" evidence="9">
    <location>
        <begin position="245"/>
        <end position="263"/>
    </location>
</feature>
<feature type="modified residue" description="Phosphoserine" evidence="5">
    <location>
        <position position="288"/>
    </location>
</feature>
<feature type="modified residue" description="Phosphoserine" evidence="5">
    <location>
        <position position="292"/>
    </location>
</feature>
<feature type="modified residue" description="Phosphothreonine" evidence="5">
    <location>
        <position position="298"/>
    </location>
</feature>
<feature type="modified residue" description="Phosphotyrosine" evidence="4">
    <location>
        <position position="315"/>
    </location>
</feature>
<feature type="sequence conflict" description="In Ref. 1; ABF57308." evidence="10" ref="1">
    <original>A</original>
    <variation>AA</variation>
    <location>
        <position position="285"/>
    </location>
</feature>
<organism>
    <name type="scientific">Bos taurus</name>
    <name type="common">Bovine</name>
    <dbReference type="NCBI Taxonomy" id="9913"/>
    <lineage>
        <taxon>Eukaryota</taxon>
        <taxon>Metazoa</taxon>
        <taxon>Chordata</taxon>
        <taxon>Craniata</taxon>
        <taxon>Vertebrata</taxon>
        <taxon>Euteleostomi</taxon>
        <taxon>Mammalia</taxon>
        <taxon>Eutheria</taxon>
        <taxon>Laurasiatheria</taxon>
        <taxon>Artiodactyla</taxon>
        <taxon>Ruminantia</taxon>
        <taxon>Pecora</taxon>
        <taxon>Bovidae</taxon>
        <taxon>Bovinae</taxon>
        <taxon>Bos</taxon>
    </lineage>
</organism>
<name>SH3G1_BOVIN</name>
<gene>
    <name evidence="11" type="primary">SH3GL1</name>
</gene>
<dbReference type="EMBL" id="BT025352">
    <property type="protein sequence ID" value="ABF57308.1"/>
    <property type="molecule type" value="mRNA"/>
</dbReference>
<dbReference type="EMBL" id="BC105444">
    <property type="protein sequence ID" value="AAI05445.1"/>
    <property type="molecule type" value="mRNA"/>
</dbReference>
<dbReference type="RefSeq" id="NP_001039595.1">
    <property type="nucleotide sequence ID" value="NM_001046130.2"/>
</dbReference>
<dbReference type="RefSeq" id="XP_005208990.1">
    <property type="nucleotide sequence ID" value="XM_005208933.2"/>
</dbReference>
<dbReference type="SMR" id="Q2KJA1"/>
<dbReference type="FunCoup" id="Q2KJA1">
    <property type="interactions" value="4203"/>
</dbReference>
<dbReference type="STRING" id="9913.ENSBTAP00000007890"/>
<dbReference type="PaxDb" id="9913-ENSBTAP00000007890"/>
<dbReference type="Ensembl" id="ENSBTAT00000007890.4">
    <property type="protein sequence ID" value="ENSBTAP00000007890.3"/>
    <property type="gene ID" value="ENSBTAG00000006007.5"/>
</dbReference>
<dbReference type="GeneID" id="512719"/>
<dbReference type="KEGG" id="bta:512719"/>
<dbReference type="CTD" id="6455"/>
<dbReference type="VEuPathDB" id="HostDB:ENSBTAG00000006007"/>
<dbReference type="VGNC" id="VGNC:34572">
    <property type="gene designation" value="SH3GL1"/>
</dbReference>
<dbReference type="eggNOG" id="KOG1118">
    <property type="taxonomic scope" value="Eukaryota"/>
</dbReference>
<dbReference type="GeneTree" id="ENSGT00940000154737"/>
<dbReference type="HOGENOM" id="CLU_047887_0_0_1"/>
<dbReference type="InParanoid" id="Q2KJA1"/>
<dbReference type="OMA" id="MFPANYC"/>
<dbReference type="OrthoDB" id="443981at2759"/>
<dbReference type="TreeFam" id="TF313281"/>
<dbReference type="Reactome" id="R-BTA-182971">
    <property type="pathway name" value="EGFR downregulation"/>
</dbReference>
<dbReference type="Reactome" id="R-BTA-6807004">
    <property type="pathway name" value="Negative regulation of MET activity"/>
</dbReference>
<dbReference type="Reactome" id="R-BTA-8856825">
    <property type="pathway name" value="Cargo recognition for clathrin-mediated endocytosis"/>
</dbReference>
<dbReference type="Reactome" id="R-BTA-8856828">
    <property type="pathway name" value="Clathrin-mediated endocytosis"/>
</dbReference>
<dbReference type="Proteomes" id="UP000009136">
    <property type="component" value="Chromosome 7"/>
</dbReference>
<dbReference type="Bgee" id="ENSBTAG00000006007">
    <property type="expression patterns" value="Expressed in esophagus and 106 other cell types or tissues"/>
</dbReference>
<dbReference type="GO" id="GO:0070161">
    <property type="term" value="C:anchoring junction"/>
    <property type="evidence" value="ECO:0007669"/>
    <property type="project" value="UniProtKB-KW"/>
</dbReference>
<dbReference type="GO" id="GO:0042995">
    <property type="term" value="C:cell projection"/>
    <property type="evidence" value="ECO:0007669"/>
    <property type="project" value="UniProtKB-KW"/>
</dbReference>
<dbReference type="GO" id="GO:0005737">
    <property type="term" value="C:cytoplasm"/>
    <property type="evidence" value="ECO:0000318"/>
    <property type="project" value="GO_Central"/>
</dbReference>
<dbReference type="GO" id="GO:0031901">
    <property type="term" value="C:early endosome membrane"/>
    <property type="evidence" value="ECO:0007669"/>
    <property type="project" value="UniProtKB-SubCell"/>
</dbReference>
<dbReference type="GO" id="GO:0098978">
    <property type="term" value="C:glutamatergic synapse"/>
    <property type="evidence" value="ECO:0000318"/>
    <property type="project" value="GO_Central"/>
</dbReference>
<dbReference type="GO" id="GO:0002102">
    <property type="term" value="C:podosome"/>
    <property type="evidence" value="ECO:0007669"/>
    <property type="project" value="UniProtKB-SubCell"/>
</dbReference>
<dbReference type="GO" id="GO:0098793">
    <property type="term" value="C:presynapse"/>
    <property type="evidence" value="ECO:0000318"/>
    <property type="project" value="GO_Central"/>
</dbReference>
<dbReference type="GO" id="GO:0008289">
    <property type="term" value="F:lipid binding"/>
    <property type="evidence" value="ECO:0007669"/>
    <property type="project" value="UniProtKB-KW"/>
</dbReference>
<dbReference type="GO" id="GO:0006897">
    <property type="term" value="P:endocytosis"/>
    <property type="evidence" value="ECO:0007669"/>
    <property type="project" value="UniProtKB-KW"/>
</dbReference>
<dbReference type="CDD" id="cd11803">
    <property type="entry name" value="SH3_Endophilin_A"/>
    <property type="match status" value="1"/>
</dbReference>
<dbReference type="FunFam" id="2.30.30.40:FF:000053">
    <property type="entry name" value="endophilin-A1 isoform X2"/>
    <property type="match status" value="1"/>
</dbReference>
<dbReference type="FunFam" id="1.20.1270.60:FF:000021">
    <property type="entry name" value="Endophilin-A2 isoform 1"/>
    <property type="match status" value="1"/>
</dbReference>
<dbReference type="Gene3D" id="1.20.1270.60">
    <property type="entry name" value="Arfaptin homology (AH) domain/BAR domain"/>
    <property type="match status" value="1"/>
</dbReference>
<dbReference type="Gene3D" id="2.30.30.40">
    <property type="entry name" value="SH3 Domains"/>
    <property type="match status" value="1"/>
</dbReference>
<dbReference type="InterPro" id="IPR027267">
    <property type="entry name" value="AH/BAR_dom_sf"/>
</dbReference>
<dbReference type="InterPro" id="IPR004148">
    <property type="entry name" value="BAR_dom"/>
</dbReference>
<dbReference type="InterPro" id="IPR035824">
    <property type="entry name" value="Endophilin_A_SH3"/>
</dbReference>
<dbReference type="InterPro" id="IPR050384">
    <property type="entry name" value="Endophilin_SH3RF"/>
</dbReference>
<dbReference type="InterPro" id="IPR036028">
    <property type="entry name" value="SH3-like_dom_sf"/>
</dbReference>
<dbReference type="InterPro" id="IPR001452">
    <property type="entry name" value="SH3_domain"/>
</dbReference>
<dbReference type="PANTHER" id="PTHR14167:SF63">
    <property type="entry name" value="ENDOPHILIN-A2"/>
    <property type="match status" value="1"/>
</dbReference>
<dbReference type="PANTHER" id="PTHR14167">
    <property type="entry name" value="SH3 DOMAIN-CONTAINING"/>
    <property type="match status" value="1"/>
</dbReference>
<dbReference type="Pfam" id="PF03114">
    <property type="entry name" value="BAR"/>
    <property type="match status" value="1"/>
</dbReference>
<dbReference type="Pfam" id="PF00018">
    <property type="entry name" value="SH3_1"/>
    <property type="match status" value="1"/>
</dbReference>
<dbReference type="PRINTS" id="PR00499">
    <property type="entry name" value="P67PHOX"/>
</dbReference>
<dbReference type="PRINTS" id="PR00452">
    <property type="entry name" value="SH3DOMAIN"/>
</dbReference>
<dbReference type="SMART" id="SM00721">
    <property type="entry name" value="BAR"/>
    <property type="match status" value="1"/>
</dbReference>
<dbReference type="SMART" id="SM00326">
    <property type="entry name" value="SH3"/>
    <property type="match status" value="1"/>
</dbReference>
<dbReference type="SUPFAM" id="SSF103657">
    <property type="entry name" value="BAR/IMD domain-like"/>
    <property type="match status" value="1"/>
</dbReference>
<dbReference type="SUPFAM" id="SSF50044">
    <property type="entry name" value="SH3-domain"/>
    <property type="match status" value="1"/>
</dbReference>
<dbReference type="PROSITE" id="PS51021">
    <property type="entry name" value="BAR"/>
    <property type="match status" value="1"/>
</dbReference>
<dbReference type="PROSITE" id="PS50002">
    <property type="entry name" value="SH3"/>
    <property type="match status" value="1"/>
</dbReference>
<keyword id="KW-0965">Cell junction</keyword>
<keyword id="KW-0966">Cell projection</keyword>
<keyword id="KW-0175">Coiled coil</keyword>
<keyword id="KW-0963">Cytoplasm</keyword>
<keyword id="KW-0254">Endocytosis</keyword>
<keyword id="KW-0967">Endosome</keyword>
<keyword id="KW-0446">Lipid-binding</keyword>
<keyword id="KW-0472">Membrane</keyword>
<keyword id="KW-0597">Phosphoprotein</keyword>
<keyword id="KW-1185">Reference proteome</keyword>
<keyword id="KW-0728">SH3 domain</keyword>
<accession>Q2KJA1</accession>
<accession>Q1JPK1</accession>